<accession>Q2TBW8</accession>
<reference key="1">
    <citation type="submission" date="2005-11" db="EMBL/GenBank/DDBJ databases">
        <authorList>
            <consortium name="NIH - Mammalian Gene Collection (MGC) project"/>
        </authorList>
    </citation>
    <scope>NUCLEOTIDE SEQUENCE [LARGE SCALE MRNA]</scope>
    <source>
        <strain>Crossbred X Angus</strain>
        <tissue>Liver</tissue>
    </source>
</reference>
<name>RL10L_BOVIN</name>
<comment type="function">
    <text evidence="1 2">Testis-specific component of the ribosome, which is required for the transition from prophase to metaphase in male meiosis I (By similarity). Compensates for the inactivated X-linked RPL10 paralog during spermatogenesis. The ribosome is a large ribonucleoprotein complex responsible for the synthesis of proteins in the cell. The small ribosomal subunit (SSU) binds messenger RNAs (mRNAs) and translates the encoded message by selecting cognate aminoacyl-transfer RNA (tRNA) molecules. The large subunit (LSU) contains the ribosomal catalytic site termed the peptidyl transferase center (PTC), which catalyzes the formation of peptide bonds, thereby polymerizing the amino acids delivered by tRNAs into a polypeptide chain. The nascent polypeptides leave the ribosome through a tunnel in the LSU and interact with protein factors that function in enzymatic processing, targeting, and the membrane insertion of nascent chains at the exit of the ribosomal tunnel (By similarity).</text>
</comment>
<comment type="subunit">
    <text evidence="2">Component of the 60S large ribosomal subunit (LSU).</text>
</comment>
<comment type="subcellular location">
    <subcellularLocation>
        <location evidence="2">Cytoplasm</location>
    </subcellularLocation>
</comment>
<comment type="similarity">
    <text evidence="3">Belongs to the universal ribosomal protein uL16 family.</text>
</comment>
<proteinExistence type="evidence at transcript level"/>
<evidence type="ECO:0000250" key="1">
    <source>
        <dbReference type="UniProtKB" id="P86048"/>
    </source>
</evidence>
<evidence type="ECO:0000250" key="2">
    <source>
        <dbReference type="UniProtKB" id="Q96L21"/>
    </source>
</evidence>
<evidence type="ECO:0000305" key="3"/>
<protein>
    <recommendedName>
        <fullName evidence="3">Large ribosomal subunit protein uL16-like</fullName>
    </recommendedName>
    <alternativeName>
        <fullName>60S ribosomal protein L10-like</fullName>
    </alternativeName>
</protein>
<organism>
    <name type="scientific">Bos taurus</name>
    <name type="common">Bovine</name>
    <dbReference type="NCBI Taxonomy" id="9913"/>
    <lineage>
        <taxon>Eukaryota</taxon>
        <taxon>Metazoa</taxon>
        <taxon>Chordata</taxon>
        <taxon>Craniata</taxon>
        <taxon>Vertebrata</taxon>
        <taxon>Euteleostomi</taxon>
        <taxon>Mammalia</taxon>
        <taxon>Eutheria</taxon>
        <taxon>Laurasiatheria</taxon>
        <taxon>Artiodactyla</taxon>
        <taxon>Ruminantia</taxon>
        <taxon>Pecora</taxon>
        <taxon>Bovidae</taxon>
        <taxon>Bovinae</taxon>
        <taxon>Bos</taxon>
    </lineage>
</organism>
<keyword id="KW-0963">Cytoplasm</keyword>
<keyword id="KW-0221">Differentiation</keyword>
<keyword id="KW-0469">Meiosis</keyword>
<keyword id="KW-1185">Reference proteome</keyword>
<keyword id="KW-0687">Ribonucleoprotein</keyword>
<keyword id="KW-0689">Ribosomal protein</keyword>
<keyword id="KW-0744">Spermatogenesis</keyword>
<gene>
    <name type="primary">RPL10L</name>
</gene>
<dbReference type="EMBL" id="BC109561">
    <property type="protein sequence ID" value="AAI09562.1"/>
    <property type="molecule type" value="mRNA"/>
</dbReference>
<dbReference type="RefSeq" id="NP_001192330.1">
    <property type="nucleotide sequence ID" value="NM_001205401.2"/>
</dbReference>
<dbReference type="SMR" id="Q2TBW8"/>
<dbReference type="FunCoup" id="Q2TBW8">
    <property type="interactions" value="822"/>
</dbReference>
<dbReference type="STRING" id="9913.ENSBTAP00000007086"/>
<dbReference type="PaxDb" id="9913-ENSBTAP00000007086"/>
<dbReference type="PeptideAtlas" id="Q2TBW8"/>
<dbReference type="Ensembl" id="ENSBTAT00000007086.5">
    <property type="protein sequence ID" value="ENSBTAP00000007086.4"/>
    <property type="gene ID" value="ENSBTAG00000024582.4"/>
</dbReference>
<dbReference type="GeneID" id="538748"/>
<dbReference type="KEGG" id="bta:538748"/>
<dbReference type="CTD" id="140801"/>
<dbReference type="VEuPathDB" id="HostDB:ENSBTAG00000024582"/>
<dbReference type="eggNOG" id="KOG0857">
    <property type="taxonomic scope" value="Eukaryota"/>
</dbReference>
<dbReference type="GeneTree" id="ENSGT00390000003897"/>
<dbReference type="HOGENOM" id="CLU_084051_0_0_1"/>
<dbReference type="InParanoid" id="Q2TBW8"/>
<dbReference type="OMA" id="GNHEIYR"/>
<dbReference type="OrthoDB" id="10258869at2759"/>
<dbReference type="TreeFam" id="TF300082"/>
<dbReference type="Reactome" id="R-BTA-156827">
    <property type="pathway name" value="L13a-mediated translational silencing of Ceruloplasmin expression"/>
</dbReference>
<dbReference type="Reactome" id="R-BTA-1799339">
    <property type="pathway name" value="SRP-dependent cotranslational protein targeting to membrane"/>
</dbReference>
<dbReference type="Reactome" id="R-BTA-6791226">
    <property type="pathway name" value="Major pathway of rRNA processing in the nucleolus and cytosol"/>
</dbReference>
<dbReference type="Reactome" id="R-BTA-72689">
    <property type="pathway name" value="Formation of a pool of free 40S subunits"/>
</dbReference>
<dbReference type="Reactome" id="R-BTA-72706">
    <property type="pathway name" value="GTP hydrolysis and joining of the 60S ribosomal subunit"/>
</dbReference>
<dbReference type="Reactome" id="R-BTA-975956">
    <property type="pathway name" value="Nonsense Mediated Decay (NMD) independent of the Exon Junction Complex (EJC)"/>
</dbReference>
<dbReference type="Reactome" id="R-BTA-975957">
    <property type="pathway name" value="Nonsense Mediated Decay (NMD) enhanced by the Exon Junction Complex (EJC)"/>
</dbReference>
<dbReference type="Proteomes" id="UP000009136">
    <property type="component" value="Chromosome 10"/>
</dbReference>
<dbReference type="Bgee" id="ENSBTAG00000024582">
    <property type="expression patterns" value="Expressed in semen and 30 other cell types or tissues"/>
</dbReference>
<dbReference type="GO" id="GO:0022625">
    <property type="term" value="C:cytosolic large ribosomal subunit"/>
    <property type="evidence" value="ECO:0000250"/>
    <property type="project" value="UniProtKB"/>
</dbReference>
<dbReference type="GO" id="GO:0005783">
    <property type="term" value="C:endoplasmic reticulum"/>
    <property type="evidence" value="ECO:0007669"/>
    <property type="project" value="Ensembl"/>
</dbReference>
<dbReference type="GO" id="GO:0005634">
    <property type="term" value="C:nucleus"/>
    <property type="evidence" value="ECO:0007669"/>
    <property type="project" value="Ensembl"/>
</dbReference>
<dbReference type="GO" id="GO:0005840">
    <property type="term" value="C:ribosome"/>
    <property type="evidence" value="ECO:0000250"/>
    <property type="project" value="UniProtKB"/>
</dbReference>
<dbReference type="GO" id="GO:0003735">
    <property type="term" value="F:structural constituent of ribosome"/>
    <property type="evidence" value="ECO:0000250"/>
    <property type="project" value="UniProtKB"/>
</dbReference>
<dbReference type="GO" id="GO:0030154">
    <property type="term" value="P:cell differentiation"/>
    <property type="evidence" value="ECO:0007669"/>
    <property type="project" value="UniProtKB-KW"/>
</dbReference>
<dbReference type="GO" id="GO:0007141">
    <property type="term" value="P:male meiosis I"/>
    <property type="evidence" value="ECO:0000250"/>
    <property type="project" value="UniProtKB"/>
</dbReference>
<dbReference type="GO" id="GO:0000027">
    <property type="term" value="P:ribosomal large subunit assembly"/>
    <property type="evidence" value="ECO:0000250"/>
    <property type="project" value="UniProtKB"/>
</dbReference>
<dbReference type="GO" id="GO:0007283">
    <property type="term" value="P:spermatogenesis"/>
    <property type="evidence" value="ECO:0000250"/>
    <property type="project" value="UniProtKB"/>
</dbReference>
<dbReference type="GO" id="GO:0006412">
    <property type="term" value="P:translation"/>
    <property type="evidence" value="ECO:0000318"/>
    <property type="project" value="GO_Central"/>
</dbReference>
<dbReference type="CDD" id="cd01433">
    <property type="entry name" value="Ribosomal_L16_L10e"/>
    <property type="match status" value="1"/>
</dbReference>
<dbReference type="FunFam" id="3.30.60.300:FF:000001">
    <property type="entry name" value="60S ribosomal protein L10"/>
    <property type="match status" value="1"/>
</dbReference>
<dbReference type="FunFam" id="3.90.1170.10:FF:000002">
    <property type="entry name" value="60S ribosomal protein L10"/>
    <property type="match status" value="1"/>
</dbReference>
<dbReference type="Gene3D" id="3.30.60.300">
    <property type="match status" value="1"/>
</dbReference>
<dbReference type="Gene3D" id="3.90.1170.10">
    <property type="entry name" value="Ribosomal protein L10e/L16"/>
    <property type="match status" value="1"/>
</dbReference>
<dbReference type="InterPro" id="IPR047873">
    <property type="entry name" value="Ribosomal_uL16"/>
</dbReference>
<dbReference type="InterPro" id="IPR018255">
    <property type="entry name" value="Ribosomal_uL16_CS_euk_arc"/>
</dbReference>
<dbReference type="InterPro" id="IPR016180">
    <property type="entry name" value="Ribosomal_uL16_dom"/>
</dbReference>
<dbReference type="InterPro" id="IPR001197">
    <property type="entry name" value="Ribosomal_uL16_euk_arch"/>
</dbReference>
<dbReference type="InterPro" id="IPR036920">
    <property type="entry name" value="Ribosomal_uL16_sf"/>
</dbReference>
<dbReference type="NCBIfam" id="NF003239">
    <property type="entry name" value="PRK04199.1-4"/>
    <property type="match status" value="1"/>
</dbReference>
<dbReference type="NCBIfam" id="TIGR00279">
    <property type="entry name" value="uL16_euk_arch"/>
    <property type="match status" value="1"/>
</dbReference>
<dbReference type="PANTHER" id="PTHR11726">
    <property type="entry name" value="60S RIBOSOMAL PROTEIN L10"/>
    <property type="match status" value="1"/>
</dbReference>
<dbReference type="Pfam" id="PF00252">
    <property type="entry name" value="Ribosomal_L16"/>
    <property type="match status" value="1"/>
</dbReference>
<dbReference type="PIRSF" id="PIRSF005590">
    <property type="entry name" value="Ribosomal_L10"/>
    <property type="match status" value="1"/>
</dbReference>
<dbReference type="SUPFAM" id="SSF54686">
    <property type="entry name" value="Ribosomal protein L16p/L10e"/>
    <property type="match status" value="1"/>
</dbReference>
<dbReference type="PROSITE" id="PS01257">
    <property type="entry name" value="RIBOSOMAL_L10E"/>
    <property type="match status" value="1"/>
</dbReference>
<sequence length="214" mass="24586">MGRRPARCYRYCKNKPYPKSRFCRGVPDAKIRIFDLGRKKAKVDEFPLCGHMVSDEYEQLSSEALEAARICANKYMVKSCGKDGFHIRVRLHPFHVIRINKMLSCAGADRLQTGMRGAFGKPQGTVARVHIGQVIMSIRTKLQNKEHVIEALRRAKFKFPGRQKIHISKKWGFTKFNADEFEDKVAKKRLIPDGCGVKYVPNRGPLDKWRALHS</sequence>
<feature type="chain" id="PRO_0000283813" description="Large ribosomal subunit protein uL16-like">
    <location>
        <begin position="1"/>
        <end position="214"/>
    </location>
</feature>